<keyword id="KW-0067">ATP-binding</keyword>
<keyword id="KW-0436">Ligase</keyword>
<keyword id="KW-0460">Magnesium</keyword>
<keyword id="KW-0479">Metal-binding</keyword>
<keyword id="KW-0520">NAD</keyword>
<keyword id="KW-0547">Nucleotide-binding</keyword>
<organism>
    <name type="scientific">Escherichia coli O9:H4 (strain HS)</name>
    <dbReference type="NCBI Taxonomy" id="331112"/>
    <lineage>
        <taxon>Bacteria</taxon>
        <taxon>Pseudomonadati</taxon>
        <taxon>Pseudomonadota</taxon>
        <taxon>Gammaproteobacteria</taxon>
        <taxon>Enterobacterales</taxon>
        <taxon>Enterobacteriaceae</taxon>
        <taxon>Escherichia</taxon>
    </lineage>
</organism>
<gene>
    <name evidence="1" type="primary">nadE</name>
    <name type="ordered locus">EcHS_A1822</name>
</gene>
<sequence length="275" mass="30637">MTLQQQIIKALGAKPQINAEEEIRRSVDFLKSYLQTYPFIKSLVLGISGGQDSTLAGKLCQMAINELRLETGNESLQFIAVRLPYGVQADEQDCQDAIAFIQPDRVLTVNIKGAVLASEQALREAGIELSDFVRGNEKARERMKAQYSIAGMTSGVVVGTDHAAEAITGFFTKYGDGGTDINPLYRLNKRQGKQLLAALACPEHLYKKAPTADLEDDRPSLPDEVALGVTYDNIDDYLEGKNVPQQVARTIENWYLKTEHKRRPPITVFDDFWKK</sequence>
<feature type="chain" id="PRO_1000077550" description="NH(3)-dependent NAD(+) synthetase">
    <location>
        <begin position="1"/>
        <end position="275"/>
    </location>
</feature>
<feature type="binding site" evidence="1">
    <location>
        <begin position="46"/>
        <end position="53"/>
    </location>
    <ligand>
        <name>ATP</name>
        <dbReference type="ChEBI" id="CHEBI:30616"/>
    </ligand>
</feature>
<feature type="binding site" evidence="1">
    <location>
        <position position="52"/>
    </location>
    <ligand>
        <name>Mg(2+)</name>
        <dbReference type="ChEBI" id="CHEBI:18420"/>
    </ligand>
</feature>
<feature type="binding site" evidence="1">
    <location>
        <position position="140"/>
    </location>
    <ligand>
        <name>deamido-NAD(+)</name>
        <dbReference type="ChEBI" id="CHEBI:58437"/>
    </ligand>
</feature>
<feature type="binding site" evidence="1">
    <location>
        <position position="160"/>
    </location>
    <ligand>
        <name>ATP</name>
        <dbReference type="ChEBI" id="CHEBI:30616"/>
    </ligand>
</feature>
<feature type="binding site" evidence="1">
    <location>
        <position position="165"/>
    </location>
    <ligand>
        <name>Mg(2+)</name>
        <dbReference type="ChEBI" id="CHEBI:18420"/>
    </ligand>
</feature>
<feature type="binding site" evidence="1">
    <location>
        <position position="173"/>
    </location>
    <ligand>
        <name>deamido-NAD(+)</name>
        <dbReference type="ChEBI" id="CHEBI:58437"/>
    </ligand>
</feature>
<feature type="binding site" evidence="1">
    <location>
        <position position="180"/>
    </location>
    <ligand>
        <name>deamido-NAD(+)</name>
        <dbReference type="ChEBI" id="CHEBI:58437"/>
    </ligand>
</feature>
<feature type="binding site" evidence="1">
    <location>
        <position position="189"/>
    </location>
    <ligand>
        <name>ATP</name>
        <dbReference type="ChEBI" id="CHEBI:30616"/>
    </ligand>
</feature>
<feature type="binding site" evidence="1">
    <location>
        <position position="211"/>
    </location>
    <ligand>
        <name>ATP</name>
        <dbReference type="ChEBI" id="CHEBI:30616"/>
    </ligand>
</feature>
<feature type="binding site" evidence="1">
    <location>
        <begin position="260"/>
        <end position="261"/>
    </location>
    <ligand>
        <name>deamido-NAD(+)</name>
        <dbReference type="ChEBI" id="CHEBI:58437"/>
    </ligand>
</feature>
<dbReference type="EC" id="6.3.1.5" evidence="1"/>
<dbReference type="EMBL" id="CP000802">
    <property type="protein sequence ID" value="ABV06135.1"/>
    <property type="molecule type" value="Genomic_DNA"/>
</dbReference>
<dbReference type="RefSeq" id="WP_000175026.1">
    <property type="nucleotide sequence ID" value="NC_009800.1"/>
</dbReference>
<dbReference type="SMR" id="A8A0T1"/>
<dbReference type="KEGG" id="ecx:EcHS_A1822"/>
<dbReference type="HOGENOM" id="CLU_059327_3_0_6"/>
<dbReference type="UniPathway" id="UPA00253">
    <property type="reaction ID" value="UER00333"/>
</dbReference>
<dbReference type="GO" id="GO:0005737">
    <property type="term" value="C:cytoplasm"/>
    <property type="evidence" value="ECO:0007669"/>
    <property type="project" value="InterPro"/>
</dbReference>
<dbReference type="GO" id="GO:0005524">
    <property type="term" value="F:ATP binding"/>
    <property type="evidence" value="ECO:0007669"/>
    <property type="project" value="UniProtKB-UniRule"/>
</dbReference>
<dbReference type="GO" id="GO:0004359">
    <property type="term" value="F:glutaminase activity"/>
    <property type="evidence" value="ECO:0007669"/>
    <property type="project" value="InterPro"/>
</dbReference>
<dbReference type="GO" id="GO:0046872">
    <property type="term" value="F:metal ion binding"/>
    <property type="evidence" value="ECO:0007669"/>
    <property type="project" value="UniProtKB-KW"/>
</dbReference>
<dbReference type="GO" id="GO:0003952">
    <property type="term" value="F:NAD+ synthase (glutamine-hydrolyzing) activity"/>
    <property type="evidence" value="ECO:0007669"/>
    <property type="project" value="InterPro"/>
</dbReference>
<dbReference type="GO" id="GO:0008795">
    <property type="term" value="F:NAD+ synthase activity"/>
    <property type="evidence" value="ECO:0007669"/>
    <property type="project" value="UniProtKB-UniRule"/>
</dbReference>
<dbReference type="GO" id="GO:0009435">
    <property type="term" value="P:NAD biosynthetic process"/>
    <property type="evidence" value="ECO:0007669"/>
    <property type="project" value="UniProtKB-UniRule"/>
</dbReference>
<dbReference type="CDD" id="cd00553">
    <property type="entry name" value="NAD_synthase"/>
    <property type="match status" value="1"/>
</dbReference>
<dbReference type="FunFam" id="3.40.50.620:FF:000015">
    <property type="entry name" value="NH(3)-dependent NAD(+) synthetase"/>
    <property type="match status" value="1"/>
</dbReference>
<dbReference type="Gene3D" id="3.40.50.620">
    <property type="entry name" value="HUPs"/>
    <property type="match status" value="1"/>
</dbReference>
<dbReference type="HAMAP" id="MF_00193">
    <property type="entry name" value="NadE_ammonia_dep"/>
    <property type="match status" value="1"/>
</dbReference>
<dbReference type="InterPro" id="IPR022310">
    <property type="entry name" value="NAD/GMP_synthase"/>
</dbReference>
<dbReference type="InterPro" id="IPR003694">
    <property type="entry name" value="NAD_synthase"/>
</dbReference>
<dbReference type="InterPro" id="IPR022926">
    <property type="entry name" value="NH(3)-dep_NAD(+)_synth"/>
</dbReference>
<dbReference type="InterPro" id="IPR014729">
    <property type="entry name" value="Rossmann-like_a/b/a_fold"/>
</dbReference>
<dbReference type="NCBIfam" id="TIGR00552">
    <property type="entry name" value="nadE"/>
    <property type="match status" value="1"/>
</dbReference>
<dbReference type="NCBIfam" id="NF001979">
    <property type="entry name" value="PRK00768.1"/>
    <property type="match status" value="1"/>
</dbReference>
<dbReference type="PANTHER" id="PTHR23090">
    <property type="entry name" value="NH 3 /GLUTAMINE-DEPENDENT NAD + SYNTHETASE"/>
    <property type="match status" value="1"/>
</dbReference>
<dbReference type="PANTHER" id="PTHR23090:SF7">
    <property type="entry name" value="NH(3)-DEPENDENT NAD(+) SYNTHETASE"/>
    <property type="match status" value="1"/>
</dbReference>
<dbReference type="Pfam" id="PF02540">
    <property type="entry name" value="NAD_synthase"/>
    <property type="match status" value="1"/>
</dbReference>
<dbReference type="SUPFAM" id="SSF52402">
    <property type="entry name" value="Adenine nucleotide alpha hydrolases-like"/>
    <property type="match status" value="1"/>
</dbReference>
<comment type="function">
    <text evidence="1">Catalyzes the ATP-dependent amidation of deamido-NAD to form NAD. Uses ammonia as a nitrogen source.</text>
</comment>
<comment type="catalytic activity">
    <reaction evidence="1">
        <text>deamido-NAD(+) + NH4(+) + ATP = AMP + diphosphate + NAD(+) + H(+)</text>
        <dbReference type="Rhea" id="RHEA:21188"/>
        <dbReference type="ChEBI" id="CHEBI:15378"/>
        <dbReference type="ChEBI" id="CHEBI:28938"/>
        <dbReference type="ChEBI" id="CHEBI:30616"/>
        <dbReference type="ChEBI" id="CHEBI:33019"/>
        <dbReference type="ChEBI" id="CHEBI:57540"/>
        <dbReference type="ChEBI" id="CHEBI:58437"/>
        <dbReference type="ChEBI" id="CHEBI:456215"/>
        <dbReference type="EC" id="6.3.1.5"/>
    </reaction>
</comment>
<comment type="pathway">
    <text evidence="1">Cofactor biosynthesis; NAD(+) biosynthesis; NAD(+) from deamido-NAD(+) (ammonia route): step 1/1.</text>
</comment>
<comment type="subunit">
    <text evidence="1">Homodimer.</text>
</comment>
<comment type="similarity">
    <text evidence="1">Belongs to the NAD synthetase family.</text>
</comment>
<proteinExistence type="inferred from homology"/>
<protein>
    <recommendedName>
        <fullName evidence="1">NH(3)-dependent NAD(+) synthetase</fullName>
        <ecNumber evidence="1">6.3.1.5</ecNumber>
    </recommendedName>
</protein>
<accession>A8A0T1</accession>
<reference key="1">
    <citation type="journal article" date="2008" name="J. Bacteriol.">
        <title>The pangenome structure of Escherichia coli: comparative genomic analysis of E. coli commensal and pathogenic isolates.</title>
        <authorList>
            <person name="Rasko D.A."/>
            <person name="Rosovitz M.J."/>
            <person name="Myers G.S.A."/>
            <person name="Mongodin E.F."/>
            <person name="Fricke W.F."/>
            <person name="Gajer P."/>
            <person name="Crabtree J."/>
            <person name="Sebaihia M."/>
            <person name="Thomson N.R."/>
            <person name="Chaudhuri R."/>
            <person name="Henderson I.R."/>
            <person name="Sperandio V."/>
            <person name="Ravel J."/>
        </authorList>
    </citation>
    <scope>NUCLEOTIDE SEQUENCE [LARGE SCALE GENOMIC DNA]</scope>
    <source>
        <strain>HS</strain>
    </source>
</reference>
<evidence type="ECO:0000255" key="1">
    <source>
        <dbReference type="HAMAP-Rule" id="MF_00193"/>
    </source>
</evidence>
<name>NADE_ECOHS</name>